<keyword id="KW-0560">Oxidoreductase</keyword>
<reference key="1">
    <citation type="journal article" date="2007" name="PLoS Genet.">
        <title>Patterns and implications of gene gain and loss in the evolution of Prochlorococcus.</title>
        <authorList>
            <person name="Kettler G.C."/>
            <person name="Martiny A.C."/>
            <person name="Huang K."/>
            <person name="Zucker J."/>
            <person name="Coleman M.L."/>
            <person name="Rodrigue S."/>
            <person name="Chen F."/>
            <person name="Lapidus A."/>
            <person name="Ferriera S."/>
            <person name="Johnson J."/>
            <person name="Steglich C."/>
            <person name="Church G.M."/>
            <person name="Richardson P."/>
            <person name="Chisholm S.W."/>
        </authorList>
    </citation>
    <scope>NUCLEOTIDE SEQUENCE [LARGE SCALE GENOMIC DNA]</scope>
    <source>
        <strain>MIT 9515</strain>
    </source>
</reference>
<evidence type="ECO:0000255" key="1">
    <source>
        <dbReference type="HAMAP-Rule" id="MF_00618"/>
    </source>
</evidence>
<proteinExistence type="inferred from homology"/>
<feature type="chain" id="PRO_1000190498" description="Phycocyanobilin:ferredoxin oxidoreductase">
    <location>
        <begin position="1"/>
        <end position="241"/>
    </location>
</feature>
<sequence length="241" mass="28173">MLSESLTKTKLIDPLILTLLQNIRGHRSNLENLKSIKIDPKLSNIISDKEGKELYIENEFHKAKGFRKLHIEVAEFSRRLKILHCVFFPDPHYDIPIFGMDLVKVNEVVSAAIVDLSPSSKNQNLKYDNLLSTIDKSVFESEREIPGWGDIFSQNVFFASLKNESEKSAFCKIVDHYLLVLIKLSKSSILDHDQEIIQERIDFQKNYCRQQMKNEKTSLVLLKYFDKKWVDEYIKKVLFDF</sequence>
<accession>A2BW83</accession>
<protein>
    <recommendedName>
        <fullName evidence="1">Phycocyanobilin:ferredoxin oxidoreductase</fullName>
        <ecNumber evidence="1">1.3.7.5</ecNumber>
    </recommendedName>
</protein>
<name>PCYA_PROM5</name>
<gene>
    <name evidence="1" type="primary">pcyA</name>
    <name type="ordered locus">P9515_08371</name>
</gene>
<dbReference type="EC" id="1.3.7.5" evidence="1"/>
<dbReference type="EMBL" id="CP000552">
    <property type="protein sequence ID" value="ABM72044.1"/>
    <property type="molecule type" value="Genomic_DNA"/>
</dbReference>
<dbReference type="RefSeq" id="WP_011820149.1">
    <property type="nucleotide sequence ID" value="NC_008817.1"/>
</dbReference>
<dbReference type="SMR" id="A2BW83"/>
<dbReference type="STRING" id="167542.P9515_08371"/>
<dbReference type="GeneID" id="60201596"/>
<dbReference type="KEGG" id="pmc:P9515_08371"/>
<dbReference type="eggNOG" id="ENOG502Z7RN">
    <property type="taxonomic scope" value="Bacteria"/>
</dbReference>
<dbReference type="HOGENOM" id="CLU_074224_0_0_3"/>
<dbReference type="OrthoDB" id="581340at2"/>
<dbReference type="Proteomes" id="UP000001589">
    <property type="component" value="Chromosome"/>
</dbReference>
<dbReference type="GO" id="GO:0050897">
    <property type="term" value="F:cobalt ion binding"/>
    <property type="evidence" value="ECO:0007669"/>
    <property type="project" value="InterPro"/>
</dbReference>
<dbReference type="GO" id="GO:0050620">
    <property type="term" value="F:phycocyanobilin:ferredoxin oxidoreductase activity"/>
    <property type="evidence" value="ECO:0007669"/>
    <property type="project" value="UniProtKB-UniRule"/>
</dbReference>
<dbReference type="GO" id="GO:0010024">
    <property type="term" value="P:phytochromobilin biosynthetic process"/>
    <property type="evidence" value="ECO:0007669"/>
    <property type="project" value="InterPro"/>
</dbReference>
<dbReference type="Gene3D" id="3.40.1500.20">
    <property type="match status" value="1"/>
</dbReference>
<dbReference type="HAMAP" id="MF_00618">
    <property type="entry name" value="Ferredoxin_bilin_red"/>
    <property type="match status" value="1"/>
</dbReference>
<dbReference type="InterPro" id="IPR009249">
    <property type="entry name" value="Ferredoxin-dep_bilin_Rdtase"/>
</dbReference>
<dbReference type="InterPro" id="IPR022870">
    <property type="entry name" value="Ferredoxin_bilin_OxRdtase"/>
</dbReference>
<dbReference type="NCBIfam" id="NF002760">
    <property type="entry name" value="PRK02816.1"/>
    <property type="match status" value="1"/>
</dbReference>
<dbReference type="PANTHER" id="PTHR34557">
    <property type="entry name" value="PHYTOCHROMOBILIN:FERREDOXIN OXIDOREDUCTASE, CHLOROPLASTIC"/>
    <property type="match status" value="1"/>
</dbReference>
<dbReference type="PANTHER" id="PTHR34557:SF1">
    <property type="entry name" value="PHYTOCHROMOBILIN:FERREDOXIN OXIDOREDUCTASE, CHLOROPLASTIC"/>
    <property type="match status" value="1"/>
</dbReference>
<dbReference type="Pfam" id="PF05996">
    <property type="entry name" value="Fe_bilin_red"/>
    <property type="match status" value="1"/>
</dbReference>
<organism>
    <name type="scientific">Prochlorococcus marinus (strain MIT 9515)</name>
    <dbReference type="NCBI Taxonomy" id="167542"/>
    <lineage>
        <taxon>Bacteria</taxon>
        <taxon>Bacillati</taxon>
        <taxon>Cyanobacteriota</taxon>
        <taxon>Cyanophyceae</taxon>
        <taxon>Synechococcales</taxon>
        <taxon>Prochlorococcaceae</taxon>
        <taxon>Prochlorococcus</taxon>
    </lineage>
</organism>
<comment type="function">
    <text evidence="1">Catalyzes the four-electron reduction of biliverdin IX-alpha (2-electron reduction at both the A and D rings); the reaction proceeds via an isolatable 2-electron intermediate, 181,182-dihydrobiliverdin.</text>
</comment>
<comment type="catalytic activity">
    <reaction evidence="1">
        <text>(2R,3Z)-phycocyanobilin + 4 oxidized [2Fe-2S]-[ferredoxin] = biliverdin IXalpha + 4 reduced [2Fe-2S]-[ferredoxin] + 4 H(+)</text>
        <dbReference type="Rhea" id="RHEA:15309"/>
        <dbReference type="Rhea" id="RHEA-COMP:10000"/>
        <dbReference type="Rhea" id="RHEA-COMP:10001"/>
        <dbReference type="ChEBI" id="CHEBI:15378"/>
        <dbReference type="ChEBI" id="CHEBI:33737"/>
        <dbReference type="ChEBI" id="CHEBI:33738"/>
        <dbReference type="ChEBI" id="CHEBI:57437"/>
        <dbReference type="ChEBI" id="CHEBI:57991"/>
        <dbReference type="EC" id="1.3.7.5"/>
    </reaction>
</comment>
<comment type="similarity">
    <text evidence="1">Belongs to the HY2 family.</text>
</comment>